<organism>
    <name type="scientific">Citrobacter koseri (strain ATCC BAA-895 / CDC 4225-83 / SGSC4696)</name>
    <dbReference type="NCBI Taxonomy" id="290338"/>
    <lineage>
        <taxon>Bacteria</taxon>
        <taxon>Pseudomonadati</taxon>
        <taxon>Pseudomonadota</taxon>
        <taxon>Gammaproteobacteria</taxon>
        <taxon>Enterobacterales</taxon>
        <taxon>Enterobacteriaceae</taxon>
        <taxon>Citrobacter</taxon>
    </lineage>
</organism>
<protein>
    <recommendedName>
        <fullName evidence="1">Regulator of ribonuclease activity A</fullName>
    </recommendedName>
</protein>
<gene>
    <name evidence="1" type="primary">rraA</name>
    <name type="ordered locus">CKO_03065</name>
</gene>
<proteinExistence type="inferred from homology"/>
<dbReference type="EMBL" id="CP000822">
    <property type="protein sequence ID" value="ABV14156.1"/>
    <property type="molecule type" value="Genomic_DNA"/>
</dbReference>
<dbReference type="RefSeq" id="WP_012133864.1">
    <property type="nucleotide sequence ID" value="NC_009792.1"/>
</dbReference>
<dbReference type="SMR" id="A8AKZ4"/>
<dbReference type="STRING" id="290338.CKO_03065"/>
<dbReference type="GeneID" id="45136871"/>
<dbReference type="KEGG" id="cko:CKO_03065"/>
<dbReference type="HOGENOM" id="CLU_072626_4_0_6"/>
<dbReference type="OrthoDB" id="943692at2"/>
<dbReference type="Proteomes" id="UP000008148">
    <property type="component" value="Chromosome"/>
</dbReference>
<dbReference type="GO" id="GO:0005829">
    <property type="term" value="C:cytosol"/>
    <property type="evidence" value="ECO:0007669"/>
    <property type="project" value="TreeGrafter"/>
</dbReference>
<dbReference type="GO" id="GO:0060698">
    <property type="term" value="F:endoribonuclease inhibitor activity"/>
    <property type="evidence" value="ECO:0007669"/>
    <property type="project" value="UniProtKB-UniRule"/>
</dbReference>
<dbReference type="GO" id="GO:0019899">
    <property type="term" value="F:enzyme binding"/>
    <property type="evidence" value="ECO:0007669"/>
    <property type="project" value="UniProtKB-UniRule"/>
</dbReference>
<dbReference type="GO" id="GO:1902369">
    <property type="term" value="P:negative regulation of RNA catabolic process"/>
    <property type="evidence" value="ECO:0007669"/>
    <property type="project" value="TreeGrafter"/>
</dbReference>
<dbReference type="CDD" id="cd16841">
    <property type="entry name" value="RraA_family"/>
    <property type="match status" value="1"/>
</dbReference>
<dbReference type="FunFam" id="3.50.30.40:FF:000001">
    <property type="entry name" value="Regulator of ribonuclease activity A"/>
    <property type="match status" value="1"/>
</dbReference>
<dbReference type="Gene3D" id="3.50.30.40">
    <property type="entry name" value="Ribonuclease E inhibitor RraA/RraA-like"/>
    <property type="match status" value="1"/>
</dbReference>
<dbReference type="HAMAP" id="MF_00471">
    <property type="entry name" value="RraA"/>
    <property type="match status" value="1"/>
</dbReference>
<dbReference type="InterPro" id="IPR010203">
    <property type="entry name" value="RraA"/>
</dbReference>
<dbReference type="InterPro" id="IPR005493">
    <property type="entry name" value="RraA/RraA-like"/>
</dbReference>
<dbReference type="InterPro" id="IPR036704">
    <property type="entry name" value="RraA/RraA-like_sf"/>
</dbReference>
<dbReference type="InterPro" id="IPR014339">
    <property type="entry name" value="RraA_gpbac"/>
</dbReference>
<dbReference type="NCBIfam" id="TIGR01935">
    <property type="entry name" value="NOT-MenG"/>
    <property type="match status" value="1"/>
</dbReference>
<dbReference type="NCBIfam" id="NF006875">
    <property type="entry name" value="PRK09372.1"/>
    <property type="match status" value="1"/>
</dbReference>
<dbReference type="NCBIfam" id="TIGR02998">
    <property type="entry name" value="RraA_entero"/>
    <property type="match status" value="1"/>
</dbReference>
<dbReference type="PANTHER" id="PTHR33254">
    <property type="entry name" value="4-HYDROXY-4-METHYL-2-OXOGLUTARATE ALDOLASE 3-RELATED"/>
    <property type="match status" value="1"/>
</dbReference>
<dbReference type="PANTHER" id="PTHR33254:SF29">
    <property type="entry name" value="REGULATOR OF RIBONUCLEASE ACTIVITY A"/>
    <property type="match status" value="1"/>
</dbReference>
<dbReference type="Pfam" id="PF03737">
    <property type="entry name" value="RraA-like"/>
    <property type="match status" value="1"/>
</dbReference>
<dbReference type="SUPFAM" id="SSF89562">
    <property type="entry name" value="RraA-like"/>
    <property type="match status" value="1"/>
</dbReference>
<keyword id="KW-0963">Cytoplasm</keyword>
<keyword id="KW-1185">Reference proteome</keyword>
<comment type="function">
    <text evidence="1">Globally modulates RNA abundance by binding to RNase E (Rne) and regulating its endonucleolytic activity. Can modulate Rne action in a substrate-dependent manner by altering the composition of the degradosome. Modulates RNA-binding and helicase activities of the degradosome.</text>
</comment>
<comment type="subunit">
    <text evidence="1">Homotrimer. Binds to both RNA-binding sites in the C-terminal region of Rne and to RhlB.</text>
</comment>
<comment type="subcellular location">
    <subcellularLocation>
        <location evidence="1">Cytoplasm</location>
    </subcellularLocation>
</comment>
<comment type="similarity">
    <text evidence="1">Belongs to the RraA family.</text>
</comment>
<feature type="chain" id="PRO_1000013833" description="Regulator of ribonuclease activity A">
    <location>
        <begin position="1"/>
        <end position="161"/>
    </location>
</feature>
<reference key="1">
    <citation type="submission" date="2007-08" db="EMBL/GenBank/DDBJ databases">
        <authorList>
            <consortium name="The Citrobacter koseri Genome Sequencing Project"/>
            <person name="McClelland M."/>
            <person name="Sanderson E.K."/>
            <person name="Porwollik S."/>
            <person name="Spieth J."/>
            <person name="Clifton W.S."/>
            <person name="Latreille P."/>
            <person name="Courtney L."/>
            <person name="Wang C."/>
            <person name="Pepin K."/>
            <person name="Bhonagiri V."/>
            <person name="Nash W."/>
            <person name="Johnson M."/>
            <person name="Thiruvilangam P."/>
            <person name="Wilson R."/>
        </authorList>
    </citation>
    <scope>NUCLEOTIDE SEQUENCE [LARGE SCALE GENOMIC DNA]</scope>
    <source>
        <strain>ATCC BAA-895 / CDC 4225-83 / SGSC4696</strain>
    </source>
</reference>
<evidence type="ECO:0000255" key="1">
    <source>
        <dbReference type="HAMAP-Rule" id="MF_00471"/>
    </source>
</evidence>
<accession>A8AKZ4</accession>
<sequence>MKYDTSELCDIYQEDVNVVEPLFSNFGGRSSFGGQIITVKCFEDNGLLYDLLEQNGRGRILLVDGGGSVRRALVDAELARLATQNEWEGLVIYGAVRQVDDLEELDIGIQALAAIPVGAAGEGIGESDVRVNFGGVTFFSGDHLYADNTGIILSEDPLDIE</sequence>
<name>RRAA_CITK8</name>